<keyword id="KW-1003">Cell membrane</keyword>
<keyword id="KW-0966">Cell projection</keyword>
<keyword id="KW-0325">Glycoprotein</keyword>
<keyword id="KW-0407">Ion channel</keyword>
<keyword id="KW-0406">Ion transport</keyword>
<keyword id="KW-0472">Membrane</keyword>
<keyword id="KW-0597">Phosphoprotein</keyword>
<keyword id="KW-0630">Potassium</keyword>
<keyword id="KW-0631">Potassium channel</keyword>
<keyword id="KW-0633">Potassium transport</keyword>
<keyword id="KW-1185">Reference proteome</keyword>
<keyword id="KW-0812">Transmembrane</keyword>
<keyword id="KW-1133">Transmembrane helix</keyword>
<keyword id="KW-0813">Transport</keyword>
<keyword id="KW-0851">Voltage-gated channel</keyword>
<proteinExistence type="evidence at protein level"/>
<sequence length="654" mass="73470">MEVAMVSAESSGCNSHMPYGYAAQARARERERLAHSRAAAAAAVAAATAAVEGTGGSGGGPHHHHQTRGAYSSHDPQGSRGSRRRRRQRTEKKKLHHRQSSFPHCSDLMPSGSEEKILRELSEEEEDEEEEEEEEEEGRFYYSEEDHGDGCSYTDLLPQDDGGGGGYSSVRYSDCCERVVINVSGLRFETQMKTLAQFPETLLGDPEKRTQYFDPLRNEYFFDRNRPSFDAILYYYQSGGRLKRPVNVPFDIFTEEVKFYQLGEEALLKFREDEGFVREEEDRALPENEFKKQIWLLFEYPESSSPARGIAIVSVLVILISIVIFCLETLPEFRDDRDLIMALSAGGHSRLLNDTSAPHLENSGHTIFNDPFFIVETVCIVWFSFEFVVRCFACPSQALFFKNIMNIIDIVSILPYFITLGTDLAQQQGGGNGQQQQAMSFAILRIIRLVRVFRIFKLSRHSKGLQILGHTLRASMRELGLLIFFLFIGVILFSSAVYFAEADEPTTHFQSIPDAFWWAVVTMTTVGYGDMKPITVGGKIVGSLCAIAGVLTIALPVPVIVSNFNYFYHRETENEEQTQLTQNAVSCPYLPSNLLKKFRSSTSSSLGDKSEYLEMEEGVKESLCGKEEKCQGKGDESETDKNNCSNAKAVETDV</sequence>
<feature type="chain" id="PRO_0000053982" description="Potassium voltage-gated channel subfamily A member 4">
    <location>
        <begin position="1"/>
        <end position="654"/>
    </location>
</feature>
<feature type="topological domain" description="Cytoplasmic" evidence="3">
    <location>
        <begin position="1"/>
        <end position="305"/>
    </location>
</feature>
<feature type="transmembrane region" description="Helical; Name=Segment S1" evidence="3">
    <location>
        <begin position="306"/>
        <end position="327"/>
    </location>
</feature>
<feature type="topological domain" description="Extracellular" evidence="3">
    <location>
        <begin position="328"/>
        <end position="371"/>
    </location>
</feature>
<feature type="transmembrane region" description="Helical; Name=Segment S2" evidence="3">
    <location>
        <begin position="372"/>
        <end position="393"/>
    </location>
</feature>
<feature type="topological domain" description="Cytoplasmic" evidence="3">
    <location>
        <begin position="394"/>
        <end position="404"/>
    </location>
</feature>
<feature type="transmembrane region" description="Helical; Name=Segment S3" evidence="3">
    <location>
        <begin position="405"/>
        <end position="425"/>
    </location>
</feature>
<feature type="topological domain" description="Extracellular" evidence="3">
    <location>
        <begin position="426"/>
        <end position="440"/>
    </location>
</feature>
<feature type="transmembrane region" description="Helical; Voltage-sensor; Name=Segment S4" evidence="3">
    <location>
        <begin position="441"/>
        <end position="461"/>
    </location>
</feature>
<feature type="topological domain" description="Cytoplasmic" evidence="3">
    <location>
        <begin position="462"/>
        <end position="476"/>
    </location>
</feature>
<feature type="transmembrane region" description="Helical; Name=Segment S5" evidence="3">
    <location>
        <begin position="477"/>
        <end position="498"/>
    </location>
</feature>
<feature type="topological domain" description="Extracellular" evidence="3">
    <location>
        <begin position="499"/>
        <end position="512"/>
    </location>
</feature>
<feature type="intramembrane region" description="Helical; Name=Pore helix" evidence="3">
    <location>
        <begin position="513"/>
        <end position="524"/>
    </location>
</feature>
<feature type="intramembrane region" evidence="3">
    <location>
        <begin position="525"/>
        <end position="532"/>
    </location>
</feature>
<feature type="topological domain" description="Extracellular" evidence="3">
    <location>
        <begin position="533"/>
        <end position="539"/>
    </location>
</feature>
<feature type="transmembrane region" description="Helical; Name=Segment S6" evidence="3">
    <location>
        <begin position="540"/>
        <end position="568"/>
    </location>
</feature>
<feature type="topological domain" description="Cytoplasmic" evidence="3">
    <location>
        <begin position="569"/>
        <end position="654"/>
    </location>
</feature>
<feature type="region of interest" description="Disordered" evidence="6">
    <location>
        <begin position="24"/>
        <end position="145"/>
    </location>
</feature>
<feature type="region of interest" description="S4-S5 linker" evidence="3">
    <location>
        <begin position="463"/>
        <end position="476"/>
    </location>
</feature>
<feature type="region of interest" description="Disordered" evidence="6">
    <location>
        <begin position="630"/>
        <end position="654"/>
    </location>
</feature>
<feature type="short sequence motif" description="Selectivity filter" evidence="3">
    <location>
        <begin position="525"/>
        <end position="530"/>
    </location>
</feature>
<feature type="short sequence motif" description="PDZ-binding" evidence="1">
    <location>
        <begin position="652"/>
        <end position="654"/>
    </location>
</feature>
<feature type="compositionally biased region" description="Low complexity" evidence="6">
    <location>
        <begin position="36"/>
        <end position="50"/>
    </location>
</feature>
<feature type="compositionally biased region" description="Basic residues" evidence="6">
    <location>
        <begin position="81"/>
        <end position="99"/>
    </location>
</feature>
<feature type="compositionally biased region" description="Acidic residues" evidence="6">
    <location>
        <begin position="122"/>
        <end position="137"/>
    </location>
</feature>
<feature type="compositionally biased region" description="Basic and acidic residues" evidence="6">
    <location>
        <begin position="630"/>
        <end position="641"/>
    </location>
</feature>
<feature type="modified residue" description="Phosphoserine" evidence="10">
    <location>
        <position position="122"/>
    </location>
</feature>
<feature type="modified residue" description="Phosphoserine; by PKA" evidence="5">
    <location>
        <position position="600"/>
    </location>
</feature>
<feature type="glycosylation site" description="N-linked (GlcNAc...) asparagine" evidence="5">
    <location>
        <position position="353"/>
    </location>
</feature>
<feature type="sequence conflict" description="In Ref. 1; AAB60668." evidence="9" ref="1">
    <original>D</original>
    <variation>E</variation>
    <location>
        <position position="160"/>
    </location>
</feature>
<feature type="sequence conflict" description="In Ref. 1; AAB60668." evidence="9" ref="1">
    <original>P</original>
    <variation>T</variation>
    <location>
        <position position="395"/>
    </location>
</feature>
<feature type="sequence conflict" description="In Ref. 1; AAB60668." evidence="9" ref="1">
    <original>E</original>
    <variation>D</variation>
    <location>
        <position position="636"/>
    </location>
</feature>
<protein>
    <recommendedName>
        <fullName>Potassium voltage-gated channel subfamily A member 4</fullName>
    </recommendedName>
    <alternativeName>
        <fullName>Voltage-gated potassium channel subunit Kv1.4</fullName>
    </alternativeName>
</protein>
<accession>Q61423</accession>
<accession>Q8CBF8</accession>
<gene>
    <name type="primary">Kcna4</name>
</gene>
<reference key="1">
    <citation type="journal article" date="1994" name="Genomics">
        <title>Genomic organization, nucleotide sequence, biophysical properties, and localization of the voltage-gated K+ channel gene KCNA4/Kv1.4 to mouse chromosome 2/human 11p14 and mapping of KCNC1/Kv3.1 to mouse 7/human 11p14.3-p15.2 and KCNA1/Kv1.1 to human 12p13.</title>
        <authorList>
            <person name="Wymore R.S."/>
            <person name="Korenberg J.R."/>
            <person name="Kinoshita K.D."/>
            <person name="Aiyar J."/>
            <person name="Coyne C."/>
            <person name="Chen X.N."/>
            <person name="Hustad C.M."/>
            <person name="Copeland N.G."/>
            <person name="Gutman G.A."/>
            <person name="Jenkins N.A."/>
            <person name="Chandy K.G."/>
        </authorList>
    </citation>
    <scope>NUCLEOTIDE SEQUENCE [GENOMIC DNA]</scope>
    <scope>FUNCTION</scope>
    <scope>SUBCELLULAR LOCATION</scope>
    <scope>TRANSPORTER ACTIVITY</scope>
    <source>
        <strain>AKR/J</strain>
    </source>
</reference>
<reference key="2">
    <citation type="journal article" date="2005" name="Science">
        <title>The transcriptional landscape of the mammalian genome.</title>
        <authorList>
            <person name="Carninci P."/>
            <person name="Kasukawa T."/>
            <person name="Katayama S."/>
            <person name="Gough J."/>
            <person name="Frith M.C."/>
            <person name="Maeda N."/>
            <person name="Oyama R."/>
            <person name="Ravasi T."/>
            <person name="Lenhard B."/>
            <person name="Wells C."/>
            <person name="Kodzius R."/>
            <person name="Shimokawa K."/>
            <person name="Bajic V.B."/>
            <person name="Brenner S.E."/>
            <person name="Batalov S."/>
            <person name="Forrest A.R."/>
            <person name="Zavolan M."/>
            <person name="Davis M.J."/>
            <person name="Wilming L.G."/>
            <person name="Aidinis V."/>
            <person name="Allen J.E."/>
            <person name="Ambesi-Impiombato A."/>
            <person name="Apweiler R."/>
            <person name="Aturaliya R.N."/>
            <person name="Bailey T.L."/>
            <person name="Bansal M."/>
            <person name="Baxter L."/>
            <person name="Beisel K.W."/>
            <person name="Bersano T."/>
            <person name="Bono H."/>
            <person name="Chalk A.M."/>
            <person name="Chiu K.P."/>
            <person name="Choudhary V."/>
            <person name="Christoffels A."/>
            <person name="Clutterbuck D.R."/>
            <person name="Crowe M.L."/>
            <person name="Dalla E."/>
            <person name="Dalrymple B.P."/>
            <person name="de Bono B."/>
            <person name="Della Gatta G."/>
            <person name="di Bernardo D."/>
            <person name="Down T."/>
            <person name="Engstrom P."/>
            <person name="Fagiolini M."/>
            <person name="Faulkner G."/>
            <person name="Fletcher C.F."/>
            <person name="Fukushima T."/>
            <person name="Furuno M."/>
            <person name="Futaki S."/>
            <person name="Gariboldi M."/>
            <person name="Georgii-Hemming P."/>
            <person name="Gingeras T.R."/>
            <person name="Gojobori T."/>
            <person name="Green R.E."/>
            <person name="Gustincich S."/>
            <person name="Harbers M."/>
            <person name="Hayashi Y."/>
            <person name="Hensch T.K."/>
            <person name="Hirokawa N."/>
            <person name="Hill D."/>
            <person name="Huminiecki L."/>
            <person name="Iacono M."/>
            <person name="Ikeo K."/>
            <person name="Iwama A."/>
            <person name="Ishikawa T."/>
            <person name="Jakt M."/>
            <person name="Kanapin A."/>
            <person name="Katoh M."/>
            <person name="Kawasawa Y."/>
            <person name="Kelso J."/>
            <person name="Kitamura H."/>
            <person name="Kitano H."/>
            <person name="Kollias G."/>
            <person name="Krishnan S.P."/>
            <person name="Kruger A."/>
            <person name="Kummerfeld S.K."/>
            <person name="Kurochkin I.V."/>
            <person name="Lareau L.F."/>
            <person name="Lazarevic D."/>
            <person name="Lipovich L."/>
            <person name="Liu J."/>
            <person name="Liuni S."/>
            <person name="McWilliam S."/>
            <person name="Madan Babu M."/>
            <person name="Madera M."/>
            <person name="Marchionni L."/>
            <person name="Matsuda H."/>
            <person name="Matsuzawa S."/>
            <person name="Miki H."/>
            <person name="Mignone F."/>
            <person name="Miyake S."/>
            <person name="Morris K."/>
            <person name="Mottagui-Tabar S."/>
            <person name="Mulder N."/>
            <person name="Nakano N."/>
            <person name="Nakauchi H."/>
            <person name="Ng P."/>
            <person name="Nilsson R."/>
            <person name="Nishiguchi S."/>
            <person name="Nishikawa S."/>
            <person name="Nori F."/>
            <person name="Ohara O."/>
            <person name="Okazaki Y."/>
            <person name="Orlando V."/>
            <person name="Pang K.C."/>
            <person name="Pavan W.J."/>
            <person name="Pavesi G."/>
            <person name="Pesole G."/>
            <person name="Petrovsky N."/>
            <person name="Piazza S."/>
            <person name="Reed J."/>
            <person name="Reid J.F."/>
            <person name="Ring B.Z."/>
            <person name="Ringwald M."/>
            <person name="Rost B."/>
            <person name="Ruan Y."/>
            <person name="Salzberg S.L."/>
            <person name="Sandelin A."/>
            <person name="Schneider C."/>
            <person name="Schoenbach C."/>
            <person name="Sekiguchi K."/>
            <person name="Semple C.A."/>
            <person name="Seno S."/>
            <person name="Sessa L."/>
            <person name="Sheng Y."/>
            <person name="Shibata Y."/>
            <person name="Shimada H."/>
            <person name="Shimada K."/>
            <person name="Silva D."/>
            <person name="Sinclair B."/>
            <person name="Sperling S."/>
            <person name="Stupka E."/>
            <person name="Sugiura K."/>
            <person name="Sultana R."/>
            <person name="Takenaka Y."/>
            <person name="Taki K."/>
            <person name="Tammoja K."/>
            <person name="Tan S.L."/>
            <person name="Tang S."/>
            <person name="Taylor M.S."/>
            <person name="Tegner J."/>
            <person name="Teichmann S.A."/>
            <person name="Ueda H.R."/>
            <person name="van Nimwegen E."/>
            <person name="Verardo R."/>
            <person name="Wei C.L."/>
            <person name="Yagi K."/>
            <person name="Yamanishi H."/>
            <person name="Zabarovsky E."/>
            <person name="Zhu S."/>
            <person name="Zimmer A."/>
            <person name="Hide W."/>
            <person name="Bult C."/>
            <person name="Grimmond S.M."/>
            <person name="Teasdale R.D."/>
            <person name="Liu E.T."/>
            <person name="Brusic V."/>
            <person name="Quackenbush J."/>
            <person name="Wahlestedt C."/>
            <person name="Mattick J.S."/>
            <person name="Hume D.A."/>
            <person name="Kai C."/>
            <person name="Sasaki D."/>
            <person name="Tomaru Y."/>
            <person name="Fukuda S."/>
            <person name="Kanamori-Katayama M."/>
            <person name="Suzuki M."/>
            <person name="Aoki J."/>
            <person name="Arakawa T."/>
            <person name="Iida J."/>
            <person name="Imamura K."/>
            <person name="Itoh M."/>
            <person name="Kato T."/>
            <person name="Kawaji H."/>
            <person name="Kawagashira N."/>
            <person name="Kawashima T."/>
            <person name="Kojima M."/>
            <person name="Kondo S."/>
            <person name="Konno H."/>
            <person name="Nakano K."/>
            <person name="Ninomiya N."/>
            <person name="Nishio T."/>
            <person name="Okada M."/>
            <person name="Plessy C."/>
            <person name="Shibata K."/>
            <person name="Shiraki T."/>
            <person name="Suzuki S."/>
            <person name="Tagami M."/>
            <person name="Waki K."/>
            <person name="Watahiki A."/>
            <person name="Okamura-Oho Y."/>
            <person name="Suzuki H."/>
            <person name="Kawai J."/>
            <person name="Hayashizaki Y."/>
        </authorList>
    </citation>
    <scope>NUCLEOTIDE SEQUENCE [LARGE SCALE MRNA]</scope>
    <source>
        <strain>C57BL/6J</strain>
        <tissue>Cerebellum</tissue>
    </source>
</reference>
<reference key="3">
    <citation type="journal article" date="2009" name="PLoS Biol.">
        <title>Lineage-specific biology revealed by a finished genome assembly of the mouse.</title>
        <authorList>
            <person name="Church D.M."/>
            <person name="Goodstadt L."/>
            <person name="Hillier L.W."/>
            <person name="Zody M.C."/>
            <person name="Goldstein S."/>
            <person name="She X."/>
            <person name="Bult C.J."/>
            <person name="Agarwala R."/>
            <person name="Cherry J.L."/>
            <person name="DiCuccio M."/>
            <person name="Hlavina W."/>
            <person name="Kapustin Y."/>
            <person name="Meric P."/>
            <person name="Maglott D."/>
            <person name="Birtle Z."/>
            <person name="Marques A.C."/>
            <person name="Graves T."/>
            <person name="Zhou S."/>
            <person name="Teague B."/>
            <person name="Potamousis K."/>
            <person name="Churas C."/>
            <person name="Place M."/>
            <person name="Herschleb J."/>
            <person name="Runnheim R."/>
            <person name="Forrest D."/>
            <person name="Amos-Landgraf J."/>
            <person name="Schwartz D.C."/>
            <person name="Cheng Z."/>
            <person name="Lindblad-Toh K."/>
            <person name="Eichler E.E."/>
            <person name="Ponting C.P."/>
        </authorList>
    </citation>
    <scope>NUCLEOTIDE SEQUENCE [LARGE SCALE GENOMIC DNA]</scope>
    <source>
        <strain>C57BL/6J</strain>
    </source>
</reference>
<reference key="4">
    <citation type="submission" date="2005-07" db="EMBL/GenBank/DDBJ databases">
        <authorList>
            <person name="Mural R.J."/>
            <person name="Adams M.D."/>
            <person name="Myers E.W."/>
            <person name="Smith H.O."/>
            <person name="Venter J.C."/>
        </authorList>
    </citation>
    <scope>NUCLEOTIDE SEQUENCE [LARGE SCALE GENOMIC DNA]</scope>
</reference>
<reference key="5">
    <citation type="journal article" date="2004" name="Genome Res.">
        <title>The status, quality, and expansion of the NIH full-length cDNA project: the Mammalian Gene Collection (MGC).</title>
        <authorList>
            <consortium name="The MGC Project Team"/>
        </authorList>
    </citation>
    <scope>NUCLEOTIDE SEQUENCE [LARGE SCALE MRNA]</scope>
</reference>
<reference key="6">
    <citation type="journal article" date="2007" name="Mol. Cell. Proteomics">
        <title>Qualitative and quantitative analyses of protein phosphorylation in naive and stimulated mouse synaptosomal preparations.</title>
        <authorList>
            <person name="Munton R.P."/>
            <person name="Tweedie-Cullen R."/>
            <person name="Livingstone-Zatchej M."/>
            <person name="Weinandy F."/>
            <person name="Waidelich M."/>
            <person name="Longo D."/>
            <person name="Gehrig P."/>
            <person name="Potthast F."/>
            <person name="Rutishauser D."/>
            <person name="Gerrits B."/>
            <person name="Panse C."/>
            <person name="Schlapbach R."/>
            <person name="Mansuy I.M."/>
        </authorList>
    </citation>
    <scope>IDENTIFICATION BY MASS SPECTROMETRY [LARGE SCALE ANALYSIS]</scope>
    <source>
        <tissue>Brain cortex</tissue>
    </source>
</reference>
<reference key="7">
    <citation type="journal article" date="2010" name="Cell">
        <title>A tissue-specific atlas of mouse protein phosphorylation and expression.</title>
        <authorList>
            <person name="Huttlin E.L."/>
            <person name="Jedrychowski M.P."/>
            <person name="Elias J.E."/>
            <person name="Goswami T."/>
            <person name="Rad R."/>
            <person name="Beausoleil S.A."/>
            <person name="Villen J."/>
            <person name="Haas W."/>
            <person name="Sowa M.E."/>
            <person name="Gygi S.P."/>
        </authorList>
    </citation>
    <scope>PHOSPHORYLATION [LARGE SCALE ANALYSIS] AT SER-122</scope>
    <scope>IDENTIFICATION BY MASS SPECTROMETRY [LARGE SCALE ANALYSIS]</scope>
    <source>
        <tissue>Brain</tissue>
    </source>
</reference>
<reference key="8">
    <citation type="journal article" date="2016" name="J. Med. Genet.">
        <title>KCNA4 deficiency leads to a syndrome of abnormal striatum, congenital cataract and intellectual disability.</title>
        <authorList>
            <person name="Kaya N."/>
            <person name="Alsagob M."/>
            <person name="D'Adamo M.C."/>
            <person name="Al-Bakheet A."/>
            <person name="Hasan S."/>
            <person name="Muccioli M."/>
            <person name="Almutairi F.B."/>
            <person name="Almass R."/>
            <person name="Aldosary M."/>
            <person name="Monies D."/>
            <person name="Mustafa O.M."/>
            <person name="Alyounes B."/>
            <person name="Kenana R."/>
            <person name="Al-Zahrani J."/>
            <person name="Naim E."/>
            <person name="Binhumaid F.S."/>
            <person name="Qari A."/>
            <person name="Almutairi F."/>
            <person name="Meyer B."/>
            <person name="Plageman T.F."/>
            <person name="Pessia M."/>
            <person name="Colak D."/>
            <person name="Al-Owain M."/>
        </authorList>
    </citation>
    <scope>TISSUE SPECIFICITY</scope>
</reference>
<name>KCNA4_MOUSE</name>
<evidence type="ECO:0000250" key="1">
    <source>
        <dbReference type="UniProtKB" id="P15385"/>
    </source>
</evidence>
<evidence type="ECO:0000250" key="2">
    <source>
        <dbReference type="UniProtKB" id="P22459"/>
    </source>
</evidence>
<evidence type="ECO:0000250" key="3">
    <source>
        <dbReference type="UniProtKB" id="P63142"/>
    </source>
</evidence>
<evidence type="ECO:0000250" key="4">
    <source>
        <dbReference type="UniProtKB" id="Q28527"/>
    </source>
</evidence>
<evidence type="ECO:0000255" key="5"/>
<evidence type="ECO:0000256" key="6">
    <source>
        <dbReference type="SAM" id="MobiDB-lite"/>
    </source>
</evidence>
<evidence type="ECO:0000269" key="7">
    <source>
    </source>
</evidence>
<evidence type="ECO:0000269" key="8">
    <source>
    </source>
</evidence>
<evidence type="ECO:0000305" key="9"/>
<evidence type="ECO:0007744" key="10">
    <source>
    </source>
</evidence>
<dbReference type="EMBL" id="U03723">
    <property type="protein sequence ID" value="AAB60668.1"/>
    <property type="molecule type" value="Genomic_DNA"/>
</dbReference>
<dbReference type="EMBL" id="AK036112">
    <property type="protein sequence ID" value="BAC29309.1"/>
    <property type="molecule type" value="mRNA"/>
</dbReference>
<dbReference type="EMBL" id="BX293548">
    <property type="status" value="NOT_ANNOTATED_CDS"/>
    <property type="molecule type" value="Genomic_DNA"/>
</dbReference>
<dbReference type="EMBL" id="CH466519">
    <property type="protein sequence ID" value="EDL27774.1"/>
    <property type="molecule type" value="Genomic_DNA"/>
</dbReference>
<dbReference type="EMBL" id="BC109014">
    <property type="protein sequence ID" value="AAI09015.1"/>
    <property type="molecule type" value="mRNA"/>
</dbReference>
<dbReference type="CCDS" id="CCDS16505.1"/>
<dbReference type="PIR" id="S09045">
    <property type="entry name" value="S09045"/>
</dbReference>
<dbReference type="RefSeq" id="NP_067250.2">
    <property type="nucleotide sequence ID" value="NM_021275.4"/>
</dbReference>
<dbReference type="RefSeq" id="XP_006498875.1">
    <property type="nucleotide sequence ID" value="XM_006498812.3"/>
</dbReference>
<dbReference type="BMRB" id="Q61423"/>
<dbReference type="SMR" id="Q61423"/>
<dbReference type="BioGRID" id="200879">
    <property type="interactions" value="6"/>
</dbReference>
<dbReference type="FunCoup" id="Q61423">
    <property type="interactions" value="519"/>
</dbReference>
<dbReference type="IntAct" id="Q61423">
    <property type="interactions" value="3"/>
</dbReference>
<dbReference type="MINT" id="Q61423"/>
<dbReference type="STRING" id="10090.ENSMUSP00000037958"/>
<dbReference type="GuidetoPHARMACOLOGY" id="541"/>
<dbReference type="GlyCosmos" id="Q61423">
    <property type="glycosylation" value="1 site, No reported glycans"/>
</dbReference>
<dbReference type="GlyGen" id="Q61423">
    <property type="glycosylation" value="2 sites, 1 O-linked glycan (1 site)"/>
</dbReference>
<dbReference type="iPTMnet" id="Q61423"/>
<dbReference type="PhosphoSitePlus" id="Q61423"/>
<dbReference type="PaxDb" id="10090-ENSMUSP00000037958"/>
<dbReference type="PeptideAtlas" id="Q61423"/>
<dbReference type="ProteomicsDB" id="263396"/>
<dbReference type="ABCD" id="Q61423">
    <property type="antibodies" value="2 sequenced antibodies"/>
</dbReference>
<dbReference type="Antibodypedia" id="3115">
    <property type="antibodies" value="192 antibodies from 33 providers"/>
</dbReference>
<dbReference type="DNASU" id="16492"/>
<dbReference type="Ensembl" id="ENSMUST00000037012.3">
    <property type="protein sequence ID" value="ENSMUSP00000037958.3"/>
    <property type="gene ID" value="ENSMUSG00000042604.6"/>
</dbReference>
<dbReference type="GeneID" id="16492"/>
<dbReference type="KEGG" id="mmu:16492"/>
<dbReference type="UCSC" id="uc008llu.2">
    <property type="organism name" value="mouse"/>
</dbReference>
<dbReference type="AGR" id="MGI:96661"/>
<dbReference type="CTD" id="3739"/>
<dbReference type="MGI" id="MGI:96661">
    <property type="gene designation" value="Kcna4"/>
</dbReference>
<dbReference type="VEuPathDB" id="HostDB:ENSMUSG00000042604"/>
<dbReference type="eggNOG" id="KOG1545">
    <property type="taxonomic scope" value="Eukaryota"/>
</dbReference>
<dbReference type="GeneTree" id="ENSGT00940000162248"/>
<dbReference type="HOGENOM" id="CLU_011722_4_0_1"/>
<dbReference type="InParanoid" id="Q61423"/>
<dbReference type="OMA" id="DHGDECS"/>
<dbReference type="OrthoDB" id="415460at2759"/>
<dbReference type="PhylomeDB" id="Q61423"/>
<dbReference type="TreeFam" id="TF313103"/>
<dbReference type="Reactome" id="R-MMU-1296072">
    <property type="pathway name" value="Voltage gated Potassium channels"/>
</dbReference>
<dbReference type="BioGRID-ORCS" id="16492">
    <property type="hits" value="6 hits in 79 CRISPR screens"/>
</dbReference>
<dbReference type="PRO" id="PR:Q61423"/>
<dbReference type="Proteomes" id="UP000000589">
    <property type="component" value="Chromosome 2"/>
</dbReference>
<dbReference type="RNAct" id="Q61423">
    <property type="molecule type" value="protein"/>
</dbReference>
<dbReference type="Bgee" id="ENSMUSG00000042604">
    <property type="expression patterns" value="Expressed in caudate-putamen and 90 other cell types or tissues"/>
</dbReference>
<dbReference type="GO" id="GO:0030424">
    <property type="term" value="C:axon"/>
    <property type="evidence" value="ECO:0000250"/>
    <property type="project" value="UniProtKB"/>
</dbReference>
<dbReference type="GO" id="GO:0043194">
    <property type="term" value="C:axon initial segment"/>
    <property type="evidence" value="ECO:0000314"/>
    <property type="project" value="MGI"/>
</dbReference>
<dbReference type="GO" id="GO:0016020">
    <property type="term" value="C:membrane"/>
    <property type="evidence" value="ECO:0000314"/>
    <property type="project" value="MGI"/>
</dbReference>
<dbReference type="GO" id="GO:0005886">
    <property type="term" value="C:plasma membrane"/>
    <property type="evidence" value="ECO:0000250"/>
    <property type="project" value="UniProtKB"/>
</dbReference>
<dbReference type="GO" id="GO:0008076">
    <property type="term" value="C:voltage-gated potassium channel complex"/>
    <property type="evidence" value="ECO:0000250"/>
    <property type="project" value="UniProtKB"/>
</dbReference>
<dbReference type="GO" id="GO:0030955">
    <property type="term" value="F:potassium ion binding"/>
    <property type="evidence" value="ECO:0007669"/>
    <property type="project" value="InterPro"/>
</dbReference>
<dbReference type="GO" id="GO:0099508">
    <property type="term" value="F:voltage-gated monoatomic ion channel activity involved in regulation of presynaptic membrane potential"/>
    <property type="evidence" value="ECO:0000314"/>
    <property type="project" value="SynGO"/>
</dbReference>
<dbReference type="GO" id="GO:0005249">
    <property type="term" value="F:voltage-gated potassium channel activity"/>
    <property type="evidence" value="ECO:0000314"/>
    <property type="project" value="UniProtKB"/>
</dbReference>
<dbReference type="GO" id="GO:0071805">
    <property type="term" value="P:potassium ion transmembrane transport"/>
    <property type="evidence" value="ECO:0000250"/>
    <property type="project" value="UniProtKB"/>
</dbReference>
<dbReference type="GO" id="GO:0051260">
    <property type="term" value="P:protein homooligomerization"/>
    <property type="evidence" value="ECO:0007669"/>
    <property type="project" value="InterPro"/>
</dbReference>
<dbReference type="FunFam" id="1.10.287.70:FF:000002">
    <property type="entry name" value="Potassium voltage-gated channel subfamily a member"/>
    <property type="match status" value="1"/>
</dbReference>
<dbReference type="FunFam" id="1.20.120.350:FF:000028">
    <property type="entry name" value="Potassium voltage-gated channel subfamily a member"/>
    <property type="match status" value="1"/>
</dbReference>
<dbReference type="FunFam" id="1.20.5.600:FF:000001">
    <property type="entry name" value="Potassium voltage-gated channel subfamily A member 4"/>
    <property type="match status" value="1"/>
</dbReference>
<dbReference type="FunFam" id="3.30.710.10:FF:000119">
    <property type="entry name" value="potassium voltage-gated channel subfamily A member 4"/>
    <property type="match status" value="1"/>
</dbReference>
<dbReference type="Gene3D" id="1.10.287.70">
    <property type="match status" value="1"/>
</dbReference>
<dbReference type="Gene3D" id="3.30.710.10">
    <property type="entry name" value="Potassium Channel Kv1.1, Chain A"/>
    <property type="match status" value="1"/>
</dbReference>
<dbReference type="Gene3D" id="1.20.5.600">
    <property type="entry name" value="Potassium channel, voltage dependent, Kv1.4, tandem inactivation domain"/>
    <property type="match status" value="1"/>
</dbReference>
<dbReference type="Gene3D" id="1.20.120.350">
    <property type="entry name" value="Voltage-gated potassium channels. Chain C"/>
    <property type="match status" value="1"/>
</dbReference>
<dbReference type="InterPro" id="IPR000210">
    <property type="entry name" value="BTB/POZ_dom"/>
</dbReference>
<dbReference type="InterPro" id="IPR005821">
    <property type="entry name" value="Ion_trans_dom"/>
</dbReference>
<dbReference type="InterPro" id="IPR003968">
    <property type="entry name" value="K_chnl_volt-dep_Kv"/>
</dbReference>
<dbReference type="InterPro" id="IPR003972">
    <property type="entry name" value="K_chnl_volt-dep_Kv1"/>
</dbReference>
<dbReference type="InterPro" id="IPR020467">
    <property type="entry name" value="K_chnl_volt-dep_Kv1.4"/>
</dbReference>
<dbReference type="InterPro" id="IPR012897">
    <property type="entry name" value="K_chnl_volt-dep_Kv1.4_TID"/>
</dbReference>
<dbReference type="InterPro" id="IPR037065">
    <property type="entry name" value="K_chnl_volt-dep_Kv1.4_TID_sf"/>
</dbReference>
<dbReference type="InterPro" id="IPR011333">
    <property type="entry name" value="SKP1/BTB/POZ_sf"/>
</dbReference>
<dbReference type="InterPro" id="IPR003131">
    <property type="entry name" value="T1-type_BTB"/>
</dbReference>
<dbReference type="InterPro" id="IPR028325">
    <property type="entry name" value="VG_K_chnl"/>
</dbReference>
<dbReference type="InterPro" id="IPR027359">
    <property type="entry name" value="Volt_channel_dom_sf"/>
</dbReference>
<dbReference type="PANTHER" id="PTHR11537:SF284">
    <property type="entry name" value="POTASSIUM VOLTAGE-GATED CHANNEL SUBFAMILY A MEMBER 4"/>
    <property type="match status" value="1"/>
</dbReference>
<dbReference type="PANTHER" id="PTHR11537">
    <property type="entry name" value="VOLTAGE-GATED POTASSIUM CHANNEL"/>
    <property type="match status" value="1"/>
</dbReference>
<dbReference type="Pfam" id="PF02214">
    <property type="entry name" value="BTB_2"/>
    <property type="match status" value="1"/>
</dbReference>
<dbReference type="Pfam" id="PF00520">
    <property type="entry name" value="Ion_trans"/>
    <property type="match status" value="1"/>
</dbReference>
<dbReference type="Pfam" id="PF07941">
    <property type="entry name" value="K_channel_TID"/>
    <property type="match status" value="1"/>
</dbReference>
<dbReference type="PRINTS" id="PR00169">
    <property type="entry name" value="KCHANNEL"/>
</dbReference>
<dbReference type="PRINTS" id="PR01511">
    <property type="entry name" value="KV14CHANNEL"/>
</dbReference>
<dbReference type="PRINTS" id="PR01491">
    <property type="entry name" value="KVCHANNEL"/>
</dbReference>
<dbReference type="PRINTS" id="PR01496">
    <property type="entry name" value="SHAKERCHANEL"/>
</dbReference>
<dbReference type="SMART" id="SM00225">
    <property type="entry name" value="BTB"/>
    <property type="match status" value="1"/>
</dbReference>
<dbReference type="SUPFAM" id="SSF54695">
    <property type="entry name" value="POZ domain"/>
    <property type="match status" value="1"/>
</dbReference>
<dbReference type="SUPFAM" id="SSF81324">
    <property type="entry name" value="Voltage-gated potassium channels"/>
    <property type="match status" value="1"/>
</dbReference>
<comment type="function">
    <text evidence="1 8">Voltage-gated potassium channel that mediates transmembrane potassium transport in excitable membranes. Forms tetrameric potassium-selective channels through which potassium ions pass in accordance with their electrochemical gradient. The channel alternates between opened and closed conformations in response to the voltage difference across the membrane (PubMed:8020965). Can form functional homotetrameric channels and heterotetrameric channels that contain variable proportions of KCNA1, KCNA2, KCNA4, KCNA5, and possibly other family members as well; channel properties depend on the type of alpha subunits that are part of the channel (By similarity). Channel properties are modulated by cytoplasmic beta subunits that regulate the subcellular location of the alpha subunits and promote rapid inactivation. In vivo, membranes probably contain a mixture of heteromeric potassium channel complexes, making it difficult to assign currents observed in intact tissues to any particular potassium channel family member. Homotetrameric KCNA4 forms a potassium channel that opens in response to membrane depolarization, followed by rapid spontaneous channel closure (PubMed:8020965). Likewise, a heterotetrameric channel formed by KCNA1 and KCNA4 shows rapid inactivation (By similarity).</text>
</comment>
<comment type="catalytic activity">
    <reaction evidence="8">
        <text>K(+)(in) = K(+)(out)</text>
        <dbReference type="Rhea" id="RHEA:29463"/>
        <dbReference type="ChEBI" id="CHEBI:29103"/>
    </reaction>
</comment>
<comment type="subunit">
    <text evidence="1 2">Homotetramer and heterotetramer of potassium channel proteins (By similarity). Interacts with KCNAB1 and KCNAB2 (By similarity). Interacts with DLG1, DLG2 and DLG4 via their PDZ domains (By similarity). Interacts with SIGMAR1 (By similarity). Detected in a complex with KCNA1 (By similarity). Interacts with KCNA2 (By similarity). Part of a complex containing KCNA1, KCNAB1 and LGI1 (By similarity). Interacts (via cytoplasmic N-terminal domain) with KCNRG (By similarity).</text>
</comment>
<comment type="interaction">
    <interactant intactId="EBI-2309633">
        <id>Q61423</id>
    </interactant>
    <interactant intactId="EBI-300895">
        <id>Q62108</id>
        <label>Dlg4</label>
    </interactant>
    <organismsDiffer>false</organismsDiffer>
    <experiments>3</experiments>
</comment>
<comment type="subcellular location">
    <subcellularLocation>
        <location evidence="8">Cell membrane</location>
        <topology evidence="5">Multi-pass membrane protein</topology>
    </subcellularLocation>
    <subcellularLocation>
        <location evidence="1">Cell projection</location>
        <location evidence="1">Axon</location>
    </subcellularLocation>
</comment>
<comment type="tissue specificity">
    <text evidence="7">Expressed in the brain, lens and retina.</text>
</comment>
<comment type="domain">
    <text evidence="4">The N-terminus may be important in determining the rate of inactivation of the channel while the tail may play a role in modulation of channel activity and/or targeting of the channel to specific subcellular compartments.</text>
</comment>
<comment type="domain">
    <text evidence="3">The transmembrane segment S4 functions as a voltage-sensor and is characterized by a series of positively charged amino acids at every third position. Channel opening and closing is effected by a conformation change that affects the position and orientation of the voltage-sensor paddle formed by S3 and S4 within the membrane. A transmembrane electric field that is positive inside would push the positively charged S4 segment outwards, thereby opening the pore, while a field that is negative inside would pull the S4 segment inwards and close the pore. Changes in the position and orientation of S4 are then transmitted to the activation gate formed by the inner helix bundle via the S4-S5 linker region.</text>
</comment>
<comment type="similarity">
    <text evidence="9">Belongs to the potassium channel family. A (Shaker) (TC 1.A.1.2) subfamily. Kv1.4/KCNA4 sub-subfamily.</text>
</comment>
<organism>
    <name type="scientific">Mus musculus</name>
    <name type="common">Mouse</name>
    <dbReference type="NCBI Taxonomy" id="10090"/>
    <lineage>
        <taxon>Eukaryota</taxon>
        <taxon>Metazoa</taxon>
        <taxon>Chordata</taxon>
        <taxon>Craniata</taxon>
        <taxon>Vertebrata</taxon>
        <taxon>Euteleostomi</taxon>
        <taxon>Mammalia</taxon>
        <taxon>Eutheria</taxon>
        <taxon>Euarchontoglires</taxon>
        <taxon>Glires</taxon>
        <taxon>Rodentia</taxon>
        <taxon>Myomorpha</taxon>
        <taxon>Muroidea</taxon>
        <taxon>Muridae</taxon>
        <taxon>Murinae</taxon>
        <taxon>Mus</taxon>
        <taxon>Mus</taxon>
    </lineage>
</organism>